<sequence>MSYQMPQNRSMSHNPYNSSDMPMPSAKEQTLMWQQNSYLGDSGIHSGAVTQVPSLSGKDDDMEDDPLMFDMDQGFSQNFTQDQVDDMNQQLSQTRSQRVRAAMFPETLEEGIEIPSTQFDPQQPTAVQRLAEPSQMLKHAVVNLINYQDDADLATRAIPELIKLLNDEDQVVVSQAAMMVHQLSKKEASRHAIMNSPQMVAALVRALSNSNDLETTKGAVGTLHNLSHHRQGLLAIFKSGGIPALVKLLSSPVESVLFYAITTLHNLLLHQDGSKMAVRLAGGLQKMVALLQRNNVKFLAIVTDCLQILAYGNQESKLIILASTGPSELVRIMRSYDYEKLLWTTSRVLKVLSVCSSNKPAIVEAGGMQALAMHLGNPSQRLVQNCLWTLRNLSDAATKVDGLETLLSGLVTVLGSSDVNVVTCAAGILSNLTCNNQRNKVTVCQVGGVEALVGTIINAGDREEITEPAVCALRHLTSRHPESESAQNVVRNGYGLPVIVKLLNPPSRWPLIKAVIGLIRNLALCPANAAPLREHGAIHLLVRLLFKAFQDTQRQRSSVASNGSQPPGAYADGVRMEEIVEGTVGALHILAKEEYNRQVIRSQNVIPIFVQLLFYNDIENIQRVAAGVLCELAVDKEVAEMIEAEGATAPLTELLNSANEGVATYAAAVLFKMSEDKSMDYKKRFSSELTTLPVFRDDSMWNNGELGIGPDLQDILSPEQAYEGLYGQGPASVHSSHGGRAFQQGYDTLPIDSMQGLEIGGGGGSSNGGATGNGGMGGQQQQSGGGPGSVVMGGGGASGMSSSGQPTSPYGMDMDVGEMEASELTFDHLDVMPSPPQDNNQVAAWYDTDL</sequence>
<dbReference type="EMBL" id="AAAB01008811">
    <property type="protein sequence ID" value="EAA04913.5"/>
    <property type="molecule type" value="Genomic_DNA"/>
</dbReference>
<dbReference type="RefSeq" id="XP_309245.5">
    <property type="nucleotide sequence ID" value="XM_309245.5"/>
</dbReference>
<dbReference type="SMR" id="Q7QHW5"/>
<dbReference type="FunCoup" id="Q7QHW5">
    <property type="interactions" value="1791"/>
</dbReference>
<dbReference type="STRING" id="7165.Q7QHW5"/>
<dbReference type="PaxDb" id="7165-AGAP001043-PA"/>
<dbReference type="EnsemblMetazoa" id="AGAP001043-RA">
    <property type="protein sequence ID" value="AGAP001043-PA"/>
    <property type="gene ID" value="AGAP001043"/>
</dbReference>
<dbReference type="VEuPathDB" id="VectorBase:AGAMI1_013287"/>
<dbReference type="VEuPathDB" id="VectorBase:AGAP001043"/>
<dbReference type="eggNOG" id="KOG4203">
    <property type="taxonomic scope" value="Eukaryota"/>
</dbReference>
<dbReference type="HOGENOM" id="CLU_008757_1_1_1"/>
<dbReference type="InParanoid" id="Q7QHW5"/>
<dbReference type="OMA" id="DPLMFDM"/>
<dbReference type="OrthoDB" id="195736at2759"/>
<dbReference type="PhylomeDB" id="Q7QHW5"/>
<dbReference type="Proteomes" id="UP000007062">
    <property type="component" value="Chromosome X"/>
</dbReference>
<dbReference type="GO" id="GO:0005912">
    <property type="term" value="C:adherens junction"/>
    <property type="evidence" value="ECO:0000318"/>
    <property type="project" value="GO_Central"/>
</dbReference>
<dbReference type="GO" id="GO:0016342">
    <property type="term" value="C:catenin complex"/>
    <property type="evidence" value="ECO:0000318"/>
    <property type="project" value="GO_Central"/>
</dbReference>
<dbReference type="GO" id="GO:0005737">
    <property type="term" value="C:cytoplasm"/>
    <property type="evidence" value="ECO:0000318"/>
    <property type="project" value="GO_Central"/>
</dbReference>
<dbReference type="GO" id="GO:0005634">
    <property type="term" value="C:nucleus"/>
    <property type="evidence" value="ECO:0000318"/>
    <property type="project" value="GO_Central"/>
</dbReference>
<dbReference type="GO" id="GO:0045294">
    <property type="term" value="F:alpha-catenin binding"/>
    <property type="evidence" value="ECO:0000318"/>
    <property type="project" value="GO_Central"/>
</dbReference>
<dbReference type="GO" id="GO:0045296">
    <property type="term" value="F:cadherin binding"/>
    <property type="evidence" value="ECO:0000318"/>
    <property type="project" value="GO_Central"/>
</dbReference>
<dbReference type="GO" id="GO:0016922">
    <property type="term" value="F:nuclear receptor binding"/>
    <property type="evidence" value="ECO:0000318"/>
    <property type="project" value="GO_Central"/>
</dbReference>
<dbReference type="GO" id="GO:0019903">
    <property type="term" value="F:protein phosphatase binding"/>
    <property type="evidence" value="ECO:0000318"/>
    <property type="project" value="GO_Central"/>
</dbReference>
<dbReference type="GO" id="GO:0003713">
    <property type="term" value="F:transcription coactivator activity"/>
    <property type="evidence" value="ECO:0000318"/>
    <property type="project" value="GO_Central"/>
</dbReference>
<dbReference type="GO" id="GO:0060070">
    <property type="term" value="P:canonical Wnt signaling pathway"/>
    <property type="evidence" value="ECO:0000318"/>
    <property type="project" value="GO_Central"/>
</dbReference>
<dbReference type="GO" id="GO:0098609">
    <property type="term" value="P:cell-cell adhesion"/>
    <property type="evidence" value="ECO:0000318"/>
    <property type="project" value="GO_Central"/>
</dbReference>
<dbReference type="GO" id="GO:0045944">
    <property type="term" value="P:positive regulation of transcription by RNA polymerase II"/>
    <property type="evidence" value="ECO:0000318"/>
    <property type="project" value="GO_Central"/>
</dbReference>
<dbReference type="GO" id="GO:0007367">
    <property type="term" value="P:segment polarity determination"/>
    <property type="evidence" value="ECO:0007669"/>
    <property type="project" value="UniProtKB-KW"/>
</dbReference>
<dbReference type="CDD" id="cd21726">
    <property type="entry name" value="CTNNAbd_dArm"/>
    <property type="match status" value="1"/>
</dbReference>
<dbReference type="FunFam" id="1.25.10.10:FF:000015">
    <property type="entry name" value="Catenin beta-1"/>
    <property type="match status" value="1"/>
</dbReference>
<dbReference type="Gene3D" id="1.25.10.10">
    <property type="entry name" value="Leucine-rich Repeat Variant"/>
    <property type="match status" value="1"/>
</dbReference>
<dbReference type="InterPro" id="IPR011989">
    <property type="entry name" value="ARM-like"/>
</dbReference>
<dbReference type="InterPro" id="IPR016024">
    <property type="entry name" value="ARM-type_fold"/>
</dbReference>
<dbReference type="InterPro" id="IPR000225">
    <property type="entry name" value="Armadillo"/>
</dbReference>
<dbReference type="InterPro" id="IPR013284">
    <property type="entry name" value="Beta-catenin"/>
</dbReference>
<dbReference type="PANTHER" id="PTHR45976">
    <property type="entry name" value="ARMADILLO SEGMENT POLARITY PROTEIN"/>
    <property type="match status" value="1"/>
</dbReference>
<dbReference type="Pfam" id="PF00514">
    <property type="entry name" value="Arm"/>
    <property type="match status" value="4"/>
</dbReference>
<dbReference type="PRINTS" id="PR01869">
    <property type="entry name" value="BCATNINFAMLY"/>
</dbReference>
<dbReference type="SMART" id="SM00185">
    <property type="entry name" value="ARM"/>
    <property type="match status" value="11"/>
</dbReference>
<dbReference type="SUPFAM" id="SSF48371">
    <property type="entry name" value="ARM repeat"/>
    <property type="match status" value="1"/>
</dbReference>
<dbReference type="PROSITE" id="PS50176">
    <property type="entry name" value="ARM_REPEAT"/>
    <property type="match status" value="9"/>
</dbReference>
<reference key="1">
    <citation type="journal article" date="2002" name="Science">
        <title>The genome sequence of the malaria mosquito Anopheles gambiae.</title>
        <authorList>
            <person name="Holt R.A."/>
            <person name="Subramanian G.M."/>
            <person name="Halpern A."/>
            <person name="Sutton G.G."/>
            <person name="Charlab R."/>
            <person name="Nusskern D.R."/>
            <person name="Wincker P."/>
            <person name="Clark A.G."/>
            <person name="Ribeiro J.M.C."/>
            <person name="Wides R."/>
            <person name="Salzberg S.L."/>
            <person name="Loftus B.J."/>
            <person name="Yandell M.D."/>
            <person name="Majoros W.H."/>
            <person name="Rusch D.B."/>
            <person name="Lai Z."/>
            <person name="Kraft C.L."/>
            <person name="Abril J.F."/>
            <person name="Anthouard V."/>
            <person name="Arensburger P."/>
            <person name="Atkinson P.W."/>
            <person name="Baden H."/>
            <person name="de Berardinis V."/>
            <person name="Baldwin D."/>
            <person name="Benes V."/>
            <person name="Biedler J."/>
            <person name="Blass C."/>
            <person name="Bolanos R."/>
            <person name="Boscus D."/>
            <person name="Barnstead M."/>
            <person name="Cai S."/>
            <person name="Center A."/>
            <person name="Chaturverdi K."/>
            <person name="Christophides G.K."/>
            <person name="Chrystal M.A.M."/>
            <person name="Clamp M."/>
            <person name="Cravchik A."/>
            <person name="Curwen V."/>
            <person name="Dana A."/>
            <person name="Delcher A."/>
            <person name="Dew I."/>
            <person name="Evans C.A."/>
            <person name="Flanigan M."/>
            <person name="Grundschober-Freimoser A."/>
            <person name="Friedli L."/>
            <person name="Gu Z."/>
            <person name="Guan P."/>
            <person name="Guigo R."/>
            <person name="Hillenmeyer M.E."/>
            <person name="Hladun S.L."/>
            <person name="Hogan J.R."/>
            <person name="Hong Y.S."/>
            <person name="Hoover J."/>
            <person name="Jaillon O."/>
            <person name="Ke Z."/>
            <person name="Kodira C.D."/>
            <person name="Kokoza E."/>
            <person name="Koutsos A."/>
            <person name="Letunic I."/>
            <person name="Levitsky A.A."/>
            <person name="Liang Y."/>
            <person name="Lin J.-J."/>
            <person name="Lobo N.F."/>
            <person name="Lopez J.R."/>
            <person name="Malek J.A."/>
            <person name="McIntosh T.C."/>
            <person name="Meister S."/>
            <person name="Miller J.R."/>
            <person name="Mobarry C."/>
            <person name="Mongin E."/>
            <person name="Murphy S.D."/>
            <person name="O'Brochta D.A."/>
            <person name="Pfannkoch C."/>
            <person name="Qi R."/>
            <person name="Regier M.A."/>
            <person name="Remington K."/>
            <person name="Shao H."/>
            <person name="Sharakhova M.V."/>
            <person name="Sitter C.D."/>
            <person name="Shetty J."/>
            <person name="Smith T.J."/>
            <person name="Strong R."/>
            <person name="Sun J."/>
            <person name="Thomasova D."/>
            <person name="Ton L.Q."/>
            <person name="Topalis P."/>
            <person name="Tu Z.J."/>
            <person name="Unger M.F."/>
            <person name="Walenz B."/>
            <person name="Wang A.H."/>
            <person name="Wang J."/>
            <person name="Wang M."/>
            <person name="Wang X."/>
            <person name="Woodford K.J."/>
            <person name="Wortman J.R."/>
            <person name="Wu M."/>
            <person name="Yao A."/>
            <person name="Zdobnov E.M."/>
            <person name="Zhang H."/>
            <person name="Zhao Q."/>
            <person name="Zhao S."/>
            <person name="Zhu S.C."/>
            <person name="Zhimulev I."/>
            <person name="Coluzzi M."/>
            <person name="della Torre A."/>
            <person name="Roth C.W."/>
            <person name="Louis C."/>
            <person name="Kalush F."/>
            <person name="Mural R.J."/>
            <person name="Myers E.W."/>
            <person name="Adams M.D."/>
            <person name="Smith H.O."/>
            <person name="Broder S."/>
            <person name="Gardner M.J."/>
            <person name="Fraser C.M."/>
            <person name="Birney E."/>
            <person name="Bork P."/>
            <person name="Brey P.T."/>
            <person name="Venter J.C."/>
            <person name="Weissenbach J."/>
            <person name="Kafatos F.C."/>
            <person name="Collins F.H."/>
            <person name="Hoffman S.L."/>
        </authorList>
    </citation>
    <scope>NUCLEOTIDE SEQUENCE [LARGE SCALE GENOMIC DNA]</scope>
    <source>
        <strain>PEST</strain>
    </source>
</reference>
<protein>
    <recommendedName>
        <fullName>Armadillo segment polarity protein</fullName>
    </recommendedName>
</protein>
<comment type="function">
    <text evidence="2">May associate with CadN and participate in the transmission of developmental information. Can associate with alpha-catenin. Accumulates through wg signaling; arm function in wg signal transduction is required early in development for determination of neuroblast fate. Arm and Abl proteins function cooperatively at adherens junctions in both the CNS and epidermis (By similarity).</text>
</comment>
<comment type="subcellular location">
    <subcellularLocation>
        <location evidence="1">Cytoplasm</location>
    </subcellularLocation>
    <subcellularLocation>
        <location evidence="1">Cell membrane</location>
        <topology evidence="1">Peripheral membrane protein</topology>
        <orientation evidence="1">Cytoplasmic side</orientation>
    </subcellularLocation>
    <subcellularLocation>
        <location evidence="1">Cell junction</location>
        <location evidence="1">Adherens junction</location>
    </subcellularLocation>
    <text evidence="1">Inner surface of cell membrane and adherens junction.</text>
</comment>
<comment type="similarity">
    <text evidence="3">Belongs to the beta-catenin family.</text>
</comment>
<feature type="chain" id="PRO_0000064291" description="Armadillo segment polarity protein">
    <location>
        <begin position="1"/>
        <end position="850"/>
    </location>
</feature>
<feature type="repeat" description="ARM 1">
    <location>
        <begin position="146"/>
        <end position="185"/>
    </location>
</feature>
<feature type="repeat" description="ARM 2">
    <location>
        <begin position="188"/>
        <end position="228"/>
    </location>
</feature>
<feature type="repeat" description="ARM 3">
    <location>
        <begin position="230"/>
        <end position="269"/>
    </location>
</feature>
<feature type="repeat" description="ARM 4">
    <location>
        <begin position="272"/>
        <end position="311"/>
    </location>
</feature>
<feature type="repeat" description="ARM 5">
    <location>
        <begin position="356"/>
        <end position="395"/>
    </location>
</feature>
<feature type="repeat" description="ARM 6">
    <location>
        <begin position="397"/>
        <end position="434"/>
    </location>
</feature>
<feature type="repeat" description="ARM 7">
    <location>
        <begin position="483"/>
        <end position="524"/>
    </location>
</feature>
<feature type="repeat" description="ARM 8">
    <location>
        <begin position="594"/>
        <end position="634"/>
    </location>
</feature>
<feature type="repeat" description="ARM 9">
    <location>
        <begin position="636"/>
        <end position="675"/>
    </location>
</feature>
<feature type="region of interest" description="Disordered" evidence="4">
    <location>
        <begin position="1"/>
        <end position="24"/>
    </location>
</feature>
<feature type="region of interest" description="Disordered" evidence="4">
    <location>
        <begin position="756"/>
        <end position="850"/>
    </location>
</feature>
<feature type="compositionally biased region" description="Polar residues" evidence="4">
    <location>
        <begin position="1"/>
        <end position="20"/>
    </location>
</feature>
<feature type="compositionally biased region" description="Gly residues" evidence="4">
    <location>
        <begin position="758"/>
        <end position="798"/>
    </location>
</feature>
<organism>
    <name type="scientific">Anopheles gambiae</name>
    <name type="common">African malaria mosquito</name>
    <dbReference type="NCBI Taxonomy" id="7165"/>
    <lineage>
        <taxon>Eukaryota</taxon>
        <taxon>Metazoa</taxon>
        <taxon>Ecdysozoa</taxon>
        <taxon>Arthropoda</taxon>
        <taxon>Hexapoda</taxon>
        <taxon>Insecta</taxon>
        <taxon>Pterygota</taxon>
        <taxon>Neoptera</taxon>
        <taxon>Endopterygota</taxon>
        <taxon>Diptera</taxon>
        <taxon>Nematocera</taxon>
        <taxon>Culicoidea</taxon>
        <taxon>Culicidae</taxon>
        <taxon>Anophelinae</taxon>
        <taxon>Anopheles</taxon>
    </lineage>
</organism>
<evidence type="ECO:0000250" key="1"/>
<evidence type="ECO:0000250" key="2">
    <source>
        <dbReference type="UniProtKB" id="P18824"/>
    </source>
</evidence>
<evidence type="ECO:0000255" key="3"/>
<evidence type="ECO:0000256" key="4">
    <source>
        <dbReference type="SAM" id="MobiDB-lite"/>
    </source>
</evidence>
<proteinExistence type="inferred from homology"/>
<name>ARM_ANOGA</name>
<keyword id="KW-0130">Cell adhesion</keyword>
<keyword id="KW-0965">Cell junction</keyword>
<keyword id="KW-1003">Cell membrane</keyword>
<keyword id="KW-0963">Cytoplasm</keyword>
<keyword id="KW-0217">Developmental protein</keyword>
<keyword id="KW-0472">Membrane</keyword>
<keyword id="KW-1185">Reference proteome</keyword>
<keyword id="KW-0677">Repeat</keyword>
<keyword id="KW-0709">Segmentation polarity protein</keyword>
<keyword id="KW-0879">Wnt signaling pathway</keyword>
<accession>Q7QHW5</accession>
<gene>
    <name type="primary">arm</name>
    <name type="ORF">AGAP001043</name>
</gene>